<reference key="1">
    <citation type="journal article" date="2005" name="Nucleic Acids Res.">
        <title>The genome sequence of Salmonella enterica serovar Choleraesuis, a highly invasive and resistant zoonotic pathogen.</title>
        <authorList>
            <person name="Chiu C.-H."/>
            <person name="Tang P."/>
            <person name="Chu C."/>
            <person name="Hu S."/>
            <person name="Bao Q."/>
            <person name="Yu J."/>
            <person name="Chou Y.-Y."/>
            <person name="Wang H.-S."/>
            <person name="Lee Y.-S."/>
        </authorList>
    </citation>
    <scope>NUCLEOTIDE SEQUENCE [LARGE SCALE GENOMIC DNA]</scope>
    <source>
        <strain>SC-B67</strain>
    </source>
</reference>
<gene>
    <name evidence="1" type="primary">yfeO</name>
    <name type="ordered locus">SCH_2407</name>
</gene>
<organism>
    <name type="scientific">Salmonella choleraesuis (strain SC-B67)</name>
    <dbReference type="NCBI Taxonomy" id="321314"/>
    <lineage>
        <taxon>Bacteria</taxon>
        <taxon>Pseudomonadati</taxon>
        <taxon>Pseudomonadota</taxon>
        <taxon>Gammaproteobacteria</taxon>
        <taxon>Enterobacterales</taxon>
        <taxon>Enterobacteriaceae</taxon>
        <taxon>Salmonella</taxon>
    </lineage>
</organism>
<protein>
    <recommendedName>
        <fullName evidence="1">Putative ion-transport protein YfeO</fullName>
    </recommendedName>
</protein>
<accession>Q57LU9</accession>
<keyword id="KW-1003">Cell membrane</keyword>
<keyword id="KW-0407">Ion channel</keyword>
<keyword id="KW-0406">Ion transport</keyword>
<keyword id="KW-0472">Membrane</keyword>
<keyword id="KW-0812">Transmembrane</keyword>
<keyword id="KW-1133">Transmembrane helix</keyword>
<keyword id="KW-0813">Transport</keyword>
<dbReference type="EMBL" id="AE017220">
    <property type="protein sequence ID" value="AAX66313.1"/>
    <property type="molecule type" value="Genomic_DNA"/>
</dbReference>
<dbReference type="RefSeq" id="WP_001540555.1">
    <property type="nucleotide sequence ID" value="NC_006905.1"/>
</dbReference>
<dbReference type="SMR" id="Q57LU9"/>
<dbReference type="KEGG" id="sec:SCH_2407"/>
<dbReference type="HOGENOM" id="CLU_053130_0_0_6"/>
<dbReference type="Proteomes" id="UP000000538">
    <property type="component" value="Chromosome"/>
</dbReference>
<dbReference type="GO" id="GO:0005886">
    <property type="term" value="C:plasma membrane"/>
    <property type="evidence" value="ECO:0007669"/>
    <property type="project" value="UniProtKB-SubCell"/>
</dbReference>
<dbReference type="GO" id="GO:0015108">
    <property type="term" value="F:chloride transmembrane transporter activity"/>
    <property type="evidence" value="ECO:0007669"/>
    <property type="project" value="InterPro"/>
</dbReference>
<dbReference type="GO" id="GO:0005216">
    <property type="term" value="F:monoatomic ion channel activity"/>
    <property type="evidence" value="ECO:0007669"/>
    <property type="project" value="UniProtKB-UniRule"/>
</dbReference>
<dbReference type="CDD" id="cd00400">
    <property type="entry name" value="Voltage_gated_ClC"/>
    <property type="match status" value="1"/>
</dbReference>
<dbReference type="FunFam" id="1.10.3080.10:FF:000007">
    <property type="entry name" value="Putative ion-transport protein YfeO"/>
    <property type="match status" value="1"/>
</dbReference>
<dbReference type="Gene3D" id="1.10.3080.10">
    <property type="entry name" value="Clc chloride channel"/>
    <property type="match status" value="1"/>
</dbReference>
<dbReference type="HAMAP" id="MF_01115">
    <property type="entry name" value="CLC_YfeO"/>
    <property type="match status" value="1"/>
</dbReference>
<dbReference type="InterPro" id="IPR022969">
    <property type="entry name" value="Chloride_channel_YfeO"/>
</dbReference>
<dbReference type="InterPro" id="IPR014743">
    <property type="entry name" value="Cl-channel_core"/>
</dbReference>
<dbReference type="InterPro" id="IPR001807">
    <property type="entry name" value="ClC"/>
</dbReference>
<dbReference type="InterPro" id="IPR050368">
    <property type="entry name" value="ClC-type_chloride_channel"/>
</dbReference>
<dbReference type="NCBIfam" id="NF002971">
    <property type="entry name" value="PRK03655.1"/>
    <property type="match status" value="1"/>
</dbReference>
<dbReference type="PANTHER" id="PTHR43427">
    <property type="entry name" value="CHLORIDE CHANNEL PROTEIN CLC-E"/>
    <property type="match status" value="1"/>
</dbReference>
<dbReference type="PANTHER" id="PTHR43427:SF9">
    <property type="entry name" value="ION-TRANSPORT PROTEIN YFEO-RELATED"/>
    <property type="match status" value="1"/>
</dbReference>
<dbReference type="Pfam" id="PF00654">
    <property type="entry name" value="Voltage_CLC"/>
    <property type="match status" value="1"/>
</dbReference>
<dbReference type="PRINTS" id="PR00762">
    <property type="entry name" value="CLCHANNEL"/>
</dbReference>
<dbReference type="SUPFAM" id="SSF81340">
    <property type="entry name" value="Clc chloride channel"/>
    <property type="match status" value="1"/>
</dbReference>
<proteinExistence type="inferred from homology"/>
<feature type="chain" id="PRO_0000298433" description="Putative ion-transport protein YfeO">
    <location>
        <begin position="1"/>
        <end position="411"/>
    </location>
</feature>
<feature type="transmembrane region" description="Helical" evidence="1">
    <location>
        <begin position="9"/>
        <end position="29"/>
    </location>
</feature>
<feature type="transmembrane region" description="Helical" evidence="1">
    <location>
        <begin position="54"/>
        <end position="74"/>
    </location>
</feature>
<feature type="transmembrane region" description="Helical" evidence="1">
    <location>
        <begin position="99"/>
        <end position="119"/>
    </location>
</feature>
<feature type="transmembrane region" description="Helical" evidence="1">
    <location>
        <begin position="149"/>
        <end position="169"/>
    </location>
</feature>
<feature type="transmembrane region" description="Helical" evidence="1">
    <location>
        <begin position="186"/>
        <end position="206"/>
    </location>
</feature>
<feature type="transmembrane region" description="Helical" evidence="1">
    <location>
        <begin position="223"/>
        <end position="243"/>
    </location>
</feature>
<feature type="transmembrane region" description="Helical" evidence="1">
    <location>
        <begin position="258"/>
        <end position="278"/>
    </location>
</feature>
<feature type="transmembrane region" description="Helical" evidence="1">
    <location>
        <begin position="296"/>
        <end position="316"/>
    </location>
</feature>
<feature type="transmembrane region" description="Helical" evidence="1">
    <location>
        <begin position="322"/>
        <end position="342"/>
    </location>
</feature>
<feature type="transmembrane region" description="Helical" evidence="1">
    <location>
        <begin position="343"/>
        <end position="363"/>
    </location>
</feature>
<feature type="transmembrane region" description="Helical" evidence="1">
    <location>
        <begin position="386"/>
        <end position="406"/>
    </location>
</feature>
<evidence type="ECO:0000255" key="1">
    <source>
        <dbReference type="HAMAP-Rule" id="MF_01115"/>
    </source>
</evidence>
<comment type="subcellular location">
    <subcellularLocation>
        <location evidence="1">Cell membrane</location>
        <topology evidence="1">Multi-pass membrane protein</topology>
    </subcellularLocation>
</comment>
<comment type="similarity">
    <text evidence="1">Belongs to the chloride channel (TC 2.A.49) family.</text>
</comment>
<sequence>MFHPRARTMLLLSLPALIIGVASSLVLIAAMKVASVFQQFLWQRLPTNIGIAYDSPFWIVGMLTLTGVVVGLIIRYSPGHAGPDPAIEPLISMPVSPSALPGLLLALIIGLAGGVSLGPEHPIMTINIALAAAFGSRLFPRITALDWTILASAGTIGALFGTPVAAALIFSQTLSGSNDIPMWDRLFAPLMAAAAGSLTTSLFFHPHFSLPIAHYTQMRLVDIASGAIVAAIAIAAGMVAVWCLPRLHELLHRLKNPVLILGIGGFILGILGVIGGPLTLFKGLDEMQQMAFSQTLGAGDYFTLAVVKLAALVIAAASGFRGGRIFPAVFIGAALGLMLHAHVEAVPAAITVSCAILGLVLVVTRDGWLSLFMAAVVVPDTNLLPLLCIVMLPAWLLLAGKPLLAANRHEP</sequence>
<name>YFEO_SALCH</name>